<reference key="1">
    <citation type="journal article" date="2007" name="Proc. Natl. Acad. Sci. U.S.A.">
        <title>Genome sequencing and comparative analysis of Saccharomyces cerevisiae strain YJM789.</title>
        <authorList>
            <person name="Wei W."/>
            <person name="McCusker J.H."/>
            <person name="Hyman R.W."/>
            <person name="Jones T."/>
            <person name="Ning Y."/>
            <person name="Cao Z."/>
            <person name="Gu Z."/>
            <person name="Bruno D."/>
            <person name="Miranda M."/>
            <person name="Nguyen M."/>
            <person name="Wilhelmy J."/>
            <person name="Komp C."/>
            <person name="Tamse R."/>
            <person name="Wang X."/>
            <person name="Jia P."/>
            <person name="Luedi P."/>
            <person name="Oefner P.J."/>
            <person name="David L."/>
            <person name="Dietrich F.S."/>
            <person name="Li Y."/>
            <person name="Davis R.W."/>
            <person name="Steinmetz L.M."/>
        </authorList>
    </citation>
    <scope>NUCLEOTIDE SEQUENCE [LARGE SCALE GENOMIC DNA]</scope>
    <source>
        <strain>YJM789</strain>
    </source>
</reference>
<comment type="function">
    <text evidence="1">ATP-binding RNA helicase involved in mitochondrial RNA metabolism. Required for maintenance of mitochondrial DNA (By similarity).</text>
</comment>
<comment type="catalytic activity">
    <reaction>
        <text>ATP + H2O = ADP + phosphate + H(+)</text>
        <dbReference type="Rhea" id="RHEA:13065"/>
        <dbReference type="ChEBI" id="CHEBI:15377"/>
        <dbReference type="ChEBI" id="CHEBI:15378"/>
        <dbReference type="ChEBI" id="CHEBI:30616"/>
        <dbReference type="ChEBI" id="CHEBI:43474"/>
        <dbReference type="ChEBI" id="CHEBI:456216"/>
        <dbReference type="EC" id="3.6.4.13"/>
    </reaction>
</comment>
<comment type="subcellular location">
    <subcellularLocation>
        <location evidence="1">Mitochondrion</location>
    </subcellularLocation>
</comment>
<comment type="domain">
    <text>The Q motif is unique to and characteristic of the DEAD box family of RNA helicases and controls ATP binding and hydrolysis.</text>
</comment>
<comment type="similarity">
    <text evidence="6">Belongs to the DEAD box helicase family. MRH4 subfamily.</text>
</comment>
<gene>
    <name type="primary">MRH4</name>
    <name type="ORF">SCY_1995</name>
</gene>
<dbReference type="EC" id="3.6.4.13"/>
<dbReference type="EMBL" id="AAFW02000099">
    <property type="protein sequence ID" value="EDN62050.1"/>
    <property type="molecule type" value="Genomic_DNA"/>
</dbReference>
<dbReference type="SMR" id="A6ZUB2"/>
<dbReference type="HOGENOM" id="CLU_003041_18_0_1"/>
<dbReference type="Proteomes" id="UP000007060">
    <property type="component" value="Unassembled WGS sequence"/>
</dbReference>
<dbReference type="GO" id="GO:0005739">
    <property type="term" value="C:mitochondrion"/>
    <property type="evidence" value="ECO:0007669"/>
    <property type="project" value="UniProtKB-SubCell"/>
</dbReference>
<dbReference type="GO" id="GO:0005524">
    <property type="term" value="F:ATP binding"/>
    <property type="evidence" value="ECO:0007669"/>
    <property type="project" value="UniProtKB-KW"/>
</dbReference>
<dbReference type="GO" id="GO:0016887">
    <property type="term" value="F:ATP hydrolysis activity"/>
    <property type="evidence" value="ECO:0007669"/>
    <property type="project" value="RHEA"/>
</dbReference>
<dbReference type="GO" id="GO:0003723">
    <property type="term" value="F:RNA binding"/>
    <property type="evidence" value="ECO:0007669"/>
    <property type="project" value="UniProtKB-KW"/>
</dbReference>
<dbReference type="GO" id="GO:0003724">
    <property type="term" value="F:RNA helicase activity"/>
    <property type="evidence" value="ECO:0007669"/>
    <property type="project" value="UniProtKB-EC"/>
</dbReference>
<dbReference type="CDD" id="cd17965">
    <property type="entry name" value="DEADc_MRH4"/>
    <property type="match status" value="1"/>
</dbReference>
<dbReference type="CDD" id="cd18787">
    <property type="entry name" value="SF2_C_DEAD"/>
    <property type="match status" value="1"/>
</dbReference>
<dbReference type="Gene3D" id="3.40.50.300">
    <property type="entry name" value="P-loop containing nucleotide triphosphate hydrolases"/>
    <property type="match status" value="2"/>
</dbReference>
<dbReference type="InterPro" id="IPR011545">
    <property type="entry name" value="DEAD/DEAH_box_helicase_dom"/>
</dbReference>
<dbReference type="InterPro" id="IPR014001">
    <property type="entry name" value="Helicase_ATP-bd"/>
</dbReference>
<dbReference type="InterPro" id="IPR001650">
    <property type="entry name" value="Helicase_C-like"/>
</dbReference>
<dbReference type="InterPro" id="IPR027417">
    <property type="entry name" value="P-loop_NTPase"/>
</dbReference>
<dbReference type="PANTHER" id="PTHR47960">
    <property type="entry name" value="DEAD-BOX ATP-DEPENDENT RNA HELICASE 50"/>
    <property type="match status" value="1"/>
</dbReference>
<dbReference type="Pfam" id="PF00270">
    <property type="entry name" value="DEAD"/>
    <property type="match status" value="1"/>
</dbReference>
<dbReference type="Pfam" id="PF00271">
    <property type="entry name" value="Helicase_C"/>
    <property type="match status" value="1"/>
</dbReference>
<dbReference type="SMART" id="SM00487">
    <property type="entry name" value="DEXDc"/>
    <property type="match status" value="1"/>
</dbReference>
<dbReference type="SMART" id="SM00490">
    <property type="entry name" value="HELICc"/>
    <property type="match status" value="1"/>
</dbReference>
<dbReference type="SUPFAM" id="SSF52540">
    <property type="entry name" value="P-loop containing nucleoside triphosphate hydrolases"/>
    <property type="match status" value="1"/>
</dbReference>
<dbReference type="PROSITE" id="PS51192">
    <property type="entry name" value="HELICASE_ATP_BIND_1"/>
    <property type="match status" value="1"/>
</dbReference>
<dbReference type="PROSITE" id="PS51194">
    <property type="entry name" value="HELICASE_CTER"/>
    <property type="match status" value="1"/>
</dbReference>
<protein>
    <recommendedName>
        <fullName>ATP-dependent RNA helicase MRH4, mitochondrial</fullName>
        <ecNumber>3.6.4.13</ecNumber>
    </recommendedName>
    <alternativeName>
        <fullName>Mitochondrial RNA helicase 4</fullName>
    </alternativeName>
</protein>
<keyword id="KW-0067">ATP-binding</keyword>
<keyword id="KW-0347">Helicase</keyword>
<keyword id="KW-0378">Hydrolase</keyword>
<keyword id="KW-0496">Mitochondrion</keyword>
<keyword id="KW-0547">Nucleotide-binding</keyword>
<keyword id="KW-0694">RNA-binding</keyword>
<keyword id="KW-0809">Transit peptide</keyword>
<organism>
    <name type="scientific">Saccharomyces cerevisiae (strain YJM789)</name>
    <name type="common">Baker's yeast</name>
    <dbReference type="NCBI Taxonomy" id="307796"/>
    <lineage>
        <taxon>Eukaryota</taxon>
        <taxon>Fungi</taxon>
        <taxon>Dikarya</taxon>
        <taxon>Ascomycota</taxon>
        <taxon>Saccharomycotina</taxon>
        <taxon>Saccharomycetes</taxon>
        <taxon>Saccharomycetales</taxon>
        <taxon>Saccharomycetaceae</taxon>
        <taxon>Saccharomyces</taxon>
    </lineage>
</organism>
<feature type="transit peptide" description="Mitochondrion" evidence="2">
    <location>
        <begin position="1"/>
        <end position="26"/>
    </location>
</feature>
<feature type="chain" id="PRO_0000310262" description="ATP-dependent RNA helicase MRH4, mitochondrial">
    <location>
        <begin position="27"/>
        <end position="561"/>
    </location>
</feature>
<feature type="domain" description="Helicase ATP-binding" evidence="3">
    <location>
        <begin position="131"/>
        <end position="319"/>
    </location>
</feature>
<feature type="domain" description="Helicase C-terminal" evidence="4">
    <location>
        <begin position="350"/>
        <end position="539"/>
    </location>
</feature>
<feature type="region of interest" description="Disordered" evidence="5">
    <location>
        <begin position="29"/>
        <end position="72"/>
    </location>
</feature>
<feature type="short sequence motif" description="Q motif">
    <location>
        <begin position="98"/>
        <end position="129"/>
    </location>
</feature>
<feature type="short sequence motif" description="DEAD box">
    <location>
        <begin position="267"/>
        <end position="270"/>
    </location>
</feature>
<feature type="compositionally biased region" description="Basic residues" evidence="5">
    <location>
        <begin position="50"/>
        <end position="62"/>
    </location>
</feature>
<feature type="binding site" evidence="3">
    <location>
        <begin position="144"/>
        <end position="151"/>
    </location>
    <ligand>
        <name>ATP</name>
        <dbReference type="ChEBI" id="CHEBI:30616"/>
    </ligand>
</feature>
<sequence>MSLFFKPVISPQWSFPVLLKIGVRSYAGGPRTKHKGNSPLASVPTGSSNKNRKQKAKGKKGNKKNDPDQAFNFGEYGGLKKDVEMNMDSTNKLIQKISNFDQLLILPPVRDAVKEIISKESLKLQDSRKKTSENIIPSPIQTVAIKRISKNLMDPKLQIHAIAAETGSGKTMAYLIPLIDYLKRQELETPELWETLRKNVLIRSIILVPTHELVDQVYETVSKTKTLLGLNSFKWDKATSYRDLLENIKNRIDILVTTPGKLLNLFSIRMITRPDKVLSKVGFVVLDEADTLLDRSWLEETHSAIKRIPNINHLIFCSATIPQEFNKTMQRLFPTVVPIMTPRLHKLPFALDFKVINSALSPFKGSKIKALAQTLYAISNDDTEPGFEKRCIIFVNEKKNVPEIVNLLNKKFGHNAIGLTGEDTFEERSEKIMPFLSPPRPLSEVVAQSTSPPTSLKKFEIPDSNIVIGKLKNTNSNGTAPSNKSLHVLVTTDLMARGLNFKGVRNVVLYDVPKTSIDLIHRVGRTARMKQGGRVFMLTDSKTKSWAKALPKIIKKHQRLS</sequence>
<accession>A6ZUB2</accession>
<evidence type="ECO:0000250" key="1"/>
<evidence type="ECO:0000255" key="2"/>
<evidence type="ECO:0000255" key="3">
    <source>
        <dbReference type="PROSITE-ProRule" id="PRU00541"/>
    </source>
</evidence>
<evidence type="ECO:0000255" key="4">
    <source>
        <dbReference type="PROSITE-ProRule" id="PRU00542"/>
    </source>
</evidence>
<evidence type="ECO:0000256" key="5">
    <source>
        <dbReference type="SAM" id="MobiDB-lite"/>
    </source>
</evidence>
<evidence type="ECO:0000305" key="6"/>
<name>MRH4_YEAS7</name>
<proteinExistence type="inferred from homology"/>